<name>RL18_PARMW</name>
<sequence length="122" mass="13331">MSKLSRKQQTQKRHRRLRRHLTGTSDRPRLAVFRSNNHIYAQVIDDDAQSTLCSASTVDKELRAGLEANGGSCDASVAVGELVAKRAIAKGIQSVVFDRGGNLYHGRIKALADAAREAGLQF</sequence>
<organism>
    <name type="scientific">Parasynechococcus marenigrum (strain WH8102)</name>
    <dbReference type="NCBI Taxonomy" id="84588"/>
    <lineage>
        <taxon>Bacteria</taxon>
        <taxon>Bacillati</taxon>
        <taxon>Cyanobacteriota</taxon>
        <taxon>Cyanophyceae</taxon>
        <taxon>Synechococcales</taxon>
        <taxon>Prochlorococcaceae</taxon>
        <taxon>Parasynechococcus</taxon>
        <taxon>Parasynechococcus marenigrum</taxon>
    </lineage>
</organism>
<reference key="1">
    <citation type="journal article" date="2003" name="Nature">
        <title>The genome of a motile marine Synechococcus.</title>
        <authorList>
            <person name="Palenik B."/>
            <person name="Brahamsha B."/>
            <person name="Larimer F.W."/>
            <person name="Land M.L."/>
            <person name="Hauser L."/>
            <person name="Chain P."/>
            <person name="Lamerdin J.E."/>
            <person name="Regala W."/>
            <person name="Allen E.E."/>
            <person name="McCarren J."/>
            <person name="Paulsen I.T."/>
            <person name="Dufresne A."/>
            <person name="Partensky F."/>
            <person name="Webb E.A."/>
            <person name="Waterbury J."/>
        </authorList>
    </citation>
    <scope>NUCLEOTIDE SEQUENCE [LARGE SCALE GENOMIC DNA]</scope>
    <source>
        <strain>WH8102</strain>
    </source>
</reference>
<gene>
    <name evidence="1" type="primary">rplR</name>
    <name evidence="1" type="synonym">rpl18</name>
    <name type="ordered locus">SYNW2082</name>
</gene>
<comment type="function">
    <text evidence="1">This is one of the proteins that bind and probably mediate the attachment of the 5S RNA into the large ribosomal subunit, where it forms part of the central protuberance.</text>
</comment>
<comment type="subunit">
    <text evidence="1">Part of the 50S ribosomal subunit; part of the 5S rRNA/L5/L18/L25 subcomplex. Contacts the 5S and 23S rRNAs.</text>
</comment>
<comment type="similarity">
    <text evidence="1">Belongs to the universal ribosomal protein uL18 family.</text>
</comment>
<accession>Q7U4I5</accession>
<feature type="chain" id="PRO_0000131368" description="Large ribosomal subunit protein uL18">
    <location>
        <begin position="1"/>
        <end position="122"/>
    </location>
</feature>
<feature type="region of interest" description="Disordered" evidence="2">
    <location>
        <begin position="1"/>
        <end position="26"/>
    </location>
</feature>
<feature type="compositionally biased region" description="Basic residues" evidence="2">
    <location>
        <begin position="1"/>
        <end position="21"/>
    </location>
</feature>
<protein>
    <recommendedName>
        <fullName evidence="1">Large ribosomal subunit protein uL18</fullName>
    </recommendedName>
    <alternativeName>
        <fullName evidence="3">50S ribosomal protein L18</fullName>
    </alternativeName>
</protein>
<proteinExistence type="inferred from homology"/>
<dbReference type="EMBL" id="BX569694">
    <property type="protein sequence ID" value="CAE08597.1"/>
    <property type="molecule type" value="Genomic_DNA"/>
</dbReference>
<dbReference type="RefSeq" id="WP_011128940.1">
    <property type="nucleotide sequence ID" value="NC_005070.1"/>
</dbReference>
<dbReference type="SMR" id="Q7U4I5"/>
<dbReference type="STRING" id="84588.SYNW2082"/>
<dbReference type="KEGG" id="syw:SYNW2082"/>
<dbReference type="eggNOG" id="COG0256">
    <property type="taxonomic scope" value="Bacteria"/>
</dbReference>
<dbReference type="HOGENOM" id="CLU_098841_0_1_3"/>
<dbReference type="Proteomes" id="UP000001422">
    <property type="component" value="Chromosome"/>
</dbReference>
<dbReference type="GO" id="GO:0022625">
    <property type="term" value="C:cytosolic large ribosomal subunit"/>
    <property type="evidence" value="ECO:0007669"/>
    <property type="project" value="TreeGrafter"/>
</dbReference>
<dbReference type="GO" id="GO:0008097">
    <property type="term" value="F:5S rRNA binding"/>
    <property type="evidence" value="ECO:0007669"/>
    <property type="project" value="TreeGrafter"/>
</dbReference>
<dbReference type="GO" id="GO:0003735">
    <property type="term" value="F:structural constituent of ribosome"/>
    <property type="evidence" value="ECO:0007669"/>
    <property type="project" value="InterPro"/>
</dbReference>
<dbReference type="GO" id="GO:0006412">
    <property type="term" value="P:translation"/>
    <property type="evidence" value="ECO:0007669"/>
    <property type="project" value="UniProtKB-UniRule"/>
</dbReference>
<dbReference type="CDD" id="cd00432">
    <property type="entry name" value="Ribosomal_L18_L5e"/>
    <property type="match status" value="1"/>
</dbReference>
<dbReference type="FunFam" id="3.30.420.100:FF:000001">
    <property type="entry name" value="50S ribosomal protein L18"/>
    <property type="match status" value="1"/>
</dbReference>
<dbReference type="Gene3D" id="3.30.420.100">
    <property type="match status" value="1"/>
</dbReference>
<dbReference type="HAMAP" id="MF_01337_B">
    <property type="entry name" value="Ribosomal_uL18_B"/>
    <property type="match status" value="1"/>
</dbReference>
<dbReference type="InterPro" id="IPR004389">
    <property type="entry name" value="Ribosomal_uL18_bac-type"/>
</dbReference>
<dbReference type="InterPro" id="IPR005484">
    <property type="entry name" value="Ribosomal_uL18_bac/euk"/>
</dbReference>
<dbReference type="NCBIfam" id="TIGR00060">
    <property type="entry name" value="L18_bact"/>
    <property type="match status" value="1"/>
</dbReference>
<dbReference type="PANTHER" id="PTHR12899">
    <property type="entry name" value="39S RIBOSOMAL PROTEIN L18, MITOCHONDRIAL"/>
    <property type="match status" value="1"/>
</dbReference>
<dbReference type="PANTHER" id="PTHR12899:SF3">
    <property type="entry name" value="LARGE RIBOSOMAL SUBUNIT PROTEIN UL18M"/>
    <property type="match status" value="1"/>
</dbReference>
<dbReference type="Pfam" id="PF00861">
    <property type="entry name" value="Ribosomal_L18p"/>
    <property type="match status" value="1"/>
</dbReference>
<dbReference type="SUPFAM" id="SSF53137">
    <property type="entry name" value="Translational machinery components"/>
    <property type="match status" value="1"/>
</dbReference>
<keyword id="KW-0687">Ribonucleoprotein</keyword>
<keyword id="KW-0689">Ribosomal protein</keyword>
<keyword id="KW-0694">RNA-binding</keyword>
<keyword id="KW-0699">rRNA-binding</keyword>
<evidence type="ECO:0000255" key="1">
    <source>
        <dbReference type="HAMAP-Rule" id="MF_01337"/>
    </source>
</evidence>
<evidence type="ECO:0000256" key="2">
    <source>
        <dbReference type="SAM" id="MobiDB-lite"/>
    </source>
</evidence>
<evidence type="ECO:0000305" key="3"/>